<comment type="similarity">
    <text evidence="1">Belongs to the bacterial ribosomal protein bS16 family.</text>
</comment>
<sequence>MAIKMRLQRFGVHKRPFYRVVASESKNARDGKFLEILGTYDTILDIVELDHNKAQKWLSNGAQPTKTVKKVFKKSKFVAKNKTKFEK</sequence>
<keyword id="KW-0687">Ribonucleoprotein</keyword>
<keyword id="KW-0689">Ribosomal protein</keyword>
<proteinExistence type="inferred from homology"/>
<feature type="chain" id="PRO_0000243770" description="Small ribosomal subunit protein bS16">
    <location>
        <begin position="1"/>
        <end position="87"/>
    </location>
</feature>
<reference key="1">
    <citation type="journal article" date="2006" name="J. Bacteriol.">
        <title>Living with genome instability: the adaptation of phytoplasmas to diverse environments of their insect and plant hosts.</title>
        <authorList>
            <person name="Bai X."/>
            <person name="Zhang J."/>
            <person name="Ewing A."/>
            <person name="Miller S.A."/>
            <person name="Jancso Radek A."/>
            <person name="Shevchenko D.V."/>
            <person name="Tsukerman K."/>
            <person name="Walunas T."/>
            <person name="Lapidus A."/>
            <person name="Campbell J.W."/>
            <person name="Hogenhout S.A."/>
        </authorList>
    </citation>
    <scope>NUCLEOTIDE SEQUENCE [LARGE SCALE GENOMIC DNA]</scope>
    <source>
        <strain>AYWB</strain>
    </source>
</reference>
<gene>
    <name evidence="1" type="primary">rpsP</name>
    <name type="ordered locus">AYWB_306</name>
</gene>
<name>RS16_AYWBP</name>
<organism>
    <name type="scientific">Aster yellows witches'-broom phytoplasma (strain AYWB)</name>
    <dbReference type="NCBI Taxonomy" id="322098"/>
    <lineage>
        <taxon>Bacteria</taxon>
        <taxon>Bacillati</taxon>
        <taxon>Mycoplasmatota</taxon>
        <taxon>Mollicutes</taxon>
        <taxon>Acholeplasmatales</taxon>
        <taxon>Acholeplasmataceae</taxon>
        <taxon>Candidatus Phytoplasma</taxon>
        <taxon>16SrI (Aster yellows group)</taxon>
    </lineage>
</organism>
<dbReference type="EMBL" id="CP000061">
    <property type="protein sequence ID" value="ABC65423.1"/>
    <property type="molecule type" value="Genomic_DNA"/>
</dbReference>
<dbReference type="RefSeq" id="WP_011412587.1">
    <property type="nucleotide sequence ID" value="NC_007716.1"/>
</dbReference>
<dbReference type="SMR" id="Q2NJH0"/>
<dbReference type="STRING" id="322098.AYWB_306"/>
<dbReference type="KEGG" id="ayw:AYWB_306"/>
<dbReference type="eggNOG" id="COG0228">
    <property type="taxonomic scope" value="Bacteria"/>
</dbReference>
<dbReference type="HOGENOM" id="CLU_100590_5_2_14"/>
<dbReference type="OrthoDB" id="9807878at2"/>
<dbReference type="PhylomeDB" id="Q2NJH0"/>
<dbReference type="Proteomes" id="UP000001934">
    <property type="component" value="Chromosome"/>
</dbReference>
<dbReference type="GO" id="GO:0005737">
    <property type="term" value="C:cytoplasm"/>
    <property type="evidence" value="ECO:0007669"/>
    <property type="project" value="UniProtKB-ARBA"/>
</dbReference>
<dbReference type="GO" id="GO:0015935">
    <property type="term" value="C:small ribosomal subunit"/>
    <property type="evidence" value="ECO:0007669"/>
    <property type="project" value="TreeGrafter"/>
</dbReference>
<dbReference type="GO" id="GO:0003735">
    <property type="term" value="F:structural constituent of ribosome"/>
    <property type="evidence" value="ECO:0007669"/>
    <property type="project" value="InterPro"/>
</dbReference>
<dbReference type="GO" id="GO:0006412">
    <property type="term" value="P:translation"/>
    <property type="evidence" value="ECO:0007669"/>
    <property type="project" value="UniProtKB-UniRule"/>
</dbReference>
<dbReference type="Gene3D" id="3.30.1320.10">
    <property type="match status" value="1"/>
</dbReference>
<dbReference type="HAMAP" id="MF_00385">
    <property type="entry name" value="Ribosomal_bS16"/>
    <property type="match status" value="1"/>
</dbReference>
<dbReference type="InterPro" id="IPR000307">
    <property type="entry name" value="Ribosomal_bS16"/>
</dbReference>
<dbReference type="InterPro" id="IPR023803">
    <property type="entry name" value="Ribosomal_bS16_dom_sf"/>
</dbReference>
<dbReference type="NCBIfam" id="TIGR00002">
    <property type="entry name" value="S16"/>
    <property type="match status" value="1"/>
</dbReference>
<dbReference type="PANTHER" id="PTHR12919">
    <property type="entry name" value="30S RIBOSOMAL PROTEIN S16"/>
    <property type="match status" value="1"/>
</dbReference>
<dbReference type="PANTHER" id="PTHR12919:SF20">
    <property type="entry name" value="SMALL RIBOSOMAL SUBUNIT PROTEIN BS16M"/>
    <property type="match status" value="1"/>
</dbReference>
<dbReference type="Pfam" id="PF00886">
    <property type="entry name" value="Ribosomal_S16"/>
    <property type="match status" value="1"/>
</dbReference>
<dbReference type="SUPFAM" id="SSF54565">
    <property type="entry name" value="Ribosomal protein S16"/>
    <property type="match status" value="1"/>
</dbReference>
<accession>Q2NJH0</accession>
<evidence type="ECO:0000255" key="1">
    <source>
        <dbReference type="HAMAP-Rule" id="MF_00385"/>
    </source>
</evidence>
<evidence type="ECO:0000305" key="2"/>
<protein>
    <recommendedName>
        <fullName evidence="1">Small ribosomal subunit protein bS16</fullName>
    </recommendedName>
    <alternativeName>
        <fullName evidence="2">30S ribosomal protein S16</fullName>
    </alternativeName>
</protein>